<comment type="function">
    <text evidence="1">Component of the Mediator complex, a coactivator involved in the regulated transcription of nearly all RNA polymerase II-dependent genes. Mediator functions as a bridge to convey information from gene-specific regulatory proteins to the basal RNA polymerase II transcription machinery. The Mediator complex, having a compact conformation in its free form, is recruited to promoters by direct interactions with regulatory proteins and serves for the assembly of a functional preinitiation complex with RNA polymerase II and the general transcription factors (By similarity).</text>
</comment>
<comment type="subunit">
    <text evidence="4">Component of the Mediator complex.</text>
</comment>
<comment type="subcellular location">
    <subcellularLocation>
        <location evidence="5">Nucleus</location>
    </subcellularLocation>
</comment>
<comment type="similarity">
    <text evidence="5">Belongs to the Mediator complex subunit 27 family.</text>
</comment>
<comment type="sequence caution" evidence="5">
    <conflict type="erroneous gene model prediction">
        <sequence resource="EMBL-CDS" id="AAD56333"/>
    </conflict>
</comment>
<comment type="sequence caution" evidence="5">
    <conflict type="erroneous gene model prediction">
        <sequence resource="EMBL-CDS" id="AAF14019"/>
    </conflict>
</comment>
<protein>
    <recommendedName>
        <fullName>Mediator of RNA polymerase II transcription subunit 27</fullName>
    </recommendedName>
    <alternativeName>
        <fullName>Mediator of RNA polymerase II transcription subunit 3</fullName>
    </alternativeName>
</protein>
<keyword id="KW-0175">Coiled coil</keyword>
<keyword id="KW-0539">Nucleus</keyword>
<keyword id="KW-1185">Reference proteome</keyword>
<keyword id="KW-0804">Transcription</keyword>
<keyword id="KW-0805">Transcription regulation</keyword>
<accession>Q8RWM3</accession>
<accession>Q8LFG5</accession>
<accession>Q9S7S1</accession>
<dbReference type="EMBL" id="AC009326">
    <property type="protein sequence ID" value="AAD56333.1"/>
    <property type="status" value="ALT_SEQ"/>
    <property type="molecule type" value="Genomic_DNA"/>
</dbReference>
<dbReference type="EMBL" id="AC011436">
    <property type="protein sequence ID" value="AAF14019.1"/>
    <property type="status" value="ALT_SEQ"/>
    <property type="molecule type" value="Genomic_DNA"/>
</dbReference>
<dbReference type="EMBL" id="CP002686">
    <property type="protein sequence ID" value="AEE74734.1"/>
    <property type="molecule type" value="Genomic_DNA"/>
</dbReference>
<dbReference type="EMBL" id="CP002686">
    <property type="protein sequence ID" value="ANM63373.1"/>
    <property type="molecule type" value="Genomic_DNA"/>
</dbReference>
<dbReference type="EMBL" id="AY093000">
    <property type="protein sequence ID" value="AAM12999.1"/>
    <property type="molecule type" value="mRNA"/>
</dbReference>
<dbReference type="EMBL" id="BT020371">
    <property type="protein sequence ID" value="AAV85726.1"/>
    <property type="molecule type" value="mRNA"/>
</dbReference>
<dbReference type="EMBL" id="AY084863">
    <property type="protein sequence ID" value="AAM61426.1"/>
    <property type="molecule type" value="mRNA"/>
</dbReference>
<dbReference type="RefSeq" id="NP_001325465.1">
    <property type="nucleotide sequence ID" value="NM_001337806.1"/>
</dbReference>
<dbReference type="RefSeq" id="NP_566345.1">
    <property type="nucleotide sequence ID" value="NM_111753.4"/>
</dbReference>
<dbReference type="SMR" id="Q8RWM3"/>
<dbReference type="BioGRID" id="5408">
    <property type="interactions" value="7"/>
</dbReference>
<dbReference type="FunCoup" id="Q8RWM3">
    <property type="interactions" value="1604"/>
</dbReference>
<dbReference type="IntAct" id="Q8RWM3">
    <property type="interactions" value="2"/>
</dbReference>
<dbReference type="STRING" id="3702.Q8RWM3"/>
<dbReference type="MetOSite" id="Q8RWM3"/>
<dbReference type="PaxDb" id="3702-AT3G09180.1"/>
<dbReference type="ProteomicsDB" id="238253"/>
<dbReference type="EnsemblPlants" id="AT3G09180.1">
    <property type="protein sequence ID" value="AT3G09180.1"/>
    <property type="gene ID" value="AT3G09180"/>
</dbReference>
<dbReference type="EnsemblPlants" id="AT3G09180.3">
    <property type="protein sequence ID" value="AT3G09180.3"/>
    <property type="gene ID" value="AT3G09180"/>
</dbReference>
<dbReference type="GeneID" id="820074"/>
<dbReference type="Gramene" id="AT3G09180.1">
    <property type="protein sequence ID" value="AT3G09180.1"/>
    <property type="gene ID" value="AT3G09180"/>
</dbReference>
<dbReference type="Gramene" id="AT3G09180.3">
    <property type="protein sequence ID" value="AT3G09180.3"/>
    <property type="gene ID" value="AT3G09180"/>
</dbReference>
<dbReference type="KEGG" id="ath:AT3G09180"/>
<dbReference type="Araport" id="AT3G09180"/>
<dbReference type="TAIR" id="AT3G09180">
    <property type="gene designation" value="MED3"/>
</dbReference>
<dbReference type="eggNOG" id="ENOG502QS7K">
    <property type="taxonomic scope" value="Eukaryota"/>
</dbReference>
<dbReference type="HOGENOM" id="CLU_058530_0_0_1"/>
<dbReference type="InParanoid" id="Q8RWM3"/>
<dbReference type="OMA" id="YRHITEH"/>
<dbReference type="OrthoDB" id="1868004at2759"/>
<dbReference type="PhylomeDB" id="Q8RWM3"/>
<dbReference type="PRO" id="PR:Q8RWM3"/>
<dbReference type="Proteomes" id="UP000006548">
    <property type="component" value="Chromosome 3"/>
</dbReference>
<dbReference type="ExpressionAtlas" id="Q8RWM3">
    <property type="expression patterns" value="baseline and differential"/>
</dbReference>
<dbReference type="GO" id="GO:0016592">
    <property type="term" value="C:mediator complex"/>
    <property type="evidence" value="ECO:0000314"/>
    <property type="project" value="UniProtKB"/>
</dbReference>
<dbReference type="InterPro" id="IPR021627">
    <property type="entry name" value="Mediator_Med27"/>
</dbReference>
<dbReference type="PANTHER" id="PTHR13130">
    <property type="entry name" value="34 KDA TRANSCRIPTIONAL CO-ACTIVATOR-RELATED"/>
    <property type="match status" value="1"/>
</dbReference>
<dbReference type="PANTHER" id="PTHR13130:SF4">
    <property type="entry name" value="MEDIATOR OF RNA POLYMERASE II TRANSCRIPTION SUBUNIT 27"/>
    <property type="match status" value="1"/>
</dbReference>
<dbReference type="Pfam" id="PF11571">
    <property type="entry name" value="Med27"/>
    <property type="match status" value="1"/>
</dbReference>
<name>MED27_ARATH</name>
<sequence>MQTLHQSQLLQNPAEAANNQSESDAPPKQVAQAMERLNQAARVIADIRLGADRILEAMFVASQPRHTDMPLQLFLREDASMRQHLQDLRLIGKKLEESGVLTESLRSRSNSWGLHMPLVCPDGAVVAYAWKRQLAGQAGASAVDRTRLALKAFTDQKRRFFPHIDDGLKMEPSSKKHRASHLLLENGREEPVDYKTLPDIQSRLEKLVPSVKVSTYGRLNWLKRANSLPGSGSDDPTEASKPIFQSSSKLRSGLQTEVVDKIAVIELSFPSLFRAIVSLSPAGSVDPDAVAFFSPDEGGSYLHARGFSVYHVYKHITEHAATALQYFLGFGTGTALYSLLLWICSFESVFSKPCTKCGRLLAMDKKSALILPPLHRAYQELPLALNLDVCEAYHSSCSQDDT</sequence>
<feature type="chain" id="PRO_0000418142" description="Mediator of RNA polymerase II transcription subunit 27">
    <location>
        <begin position="1"/>
        <end position="402"/>
    </location>
</feature>
<feature type="region of interest" description="Disordered" evidence="3">
    <location>
        <begin position="1"/>
        <end position="30"/>
    </location>
</feature>
<feature type="coiled-coil region" evidence="2">
    <location>
        <begin position="28"/>
        <end position="49"/>
    </location>
</feature>
<feature type="compositionally biased region" description="Polar residues" evidence="3">
    <location>
        <begin position="1"/>
        <end position="23"/>
    </location>
</feature>
<feature type="sequence conflict" description="In Ref. 5; AAM61426." evidence="5" ref="5">
    <original>Q</original>
    <variation>L</variation>
    <location>
        <position position="11"/>
    </location>
</feature>
<feature type="sequence conflict" description="In Ref. 5; AAM61426." evidence="5" ref="5">
    <original>G</original>
    <variation>A</variation>
    <location>
        <position position="283"/>
    </location>
</feature>
<organism>
    <name type="scientific">Arabidopsis thaliana</name>
    <name type="common">Mouse-ear cress</name>
    <dbReference type="NCBI Taxonomy" id="3702"/>
    <lineage>
        <taxon>Eukaryota</taxon>
        <taxon>Viridiplantae</taxon>
        <taxon>Streptophyta</taxon>
        <taxon>Embryophyta</taxon>
        <taxon>Tracheophyta</taxon>
        <taxon>Spermatophyta</taxon>
        <taxon>Magnoliopsida</taxon>
        <taxon>eudicotyledons</taxon>
        <taxon>Gunneridae</taxon>
        <taxon>Pentapetalae</taxon>
        <taxon>rosids</taxon>
        <taxon>malvids</taxon>
        <taxon>Brassicales</taxon>
        <taxon>Brassicaceae</taxon>
        <taxon>Camelineae</taxon>
        <taxon>Arabidopsis</taxon>
    </lineage>
</organism>
<proteinExistence type="evidence at protein level"/>
<reference key="1">
    <citation type="journal article" date="2000" name="Nature">
        <title>Sequence and analysis of chromosome 3 of the plant Arabidopsis thaliana.</title>
        <authorList>
            <person name="Salanoubat M."/>
            <person name="Lemcke K."/>
            <person name="Rieger M."/>
            <person name="Ansorge W."/>
            <person name="Unseld M."/>
            <person name="Fartmann B."/>
            <person name="Valle G."/>
            <person name="Bloecker H."/>
            <person name="Perez-Alonso M."/>
            <person name="Obermaier B."/>
            <person name="Delseny M."/>
            <person name="Boutry M."/>
            <person name="Grivell L.A."/>
            <person name="Mache R."/>
            <person name="Puigdomenech P."/>
            <person name="De Simone V."/>
            <person name="Choisne N."/>
            <person name="Artiguenave F."/>
            <person name="Robert C."/>
            <person name="Brottier P."/>
            <person name="Wincker P."/>
            <person name="Cattolico L."/>
            <person name="Weissenbach J."/>
            <person name="Saurin W."/>
            <person name="Quetier F."/>
            <person name="Schaefer M."/>
            <person name="Mueller-Auer S."/>
            <person name="Gabel C."/>
            <person name="Fuchs M."/>
            <person name="Benes V."/>
            <person name="Wurmbach E."/>
            <person name="Drzonek H."/>
            <person name="Erfle H."/>
            <person name="Jordan N."/>
            <person name="Bangert S."/>
            <person name="Wiedelmann R."/>
            <person name="Kranz H."/>
            <person name="Voss H."/>
            <person name="Holland R."/>
            <person name="Brandt P."/>
            <person name="Nyakatura G."/>
            <person name="Vezzi A."/>
            <person name="D'Angelo M."/>
            <person name="Pallavicini A."/>
            <person name="Toppo S."/>
            <person name="Simionati B."/>
            <person name="Conrad A."/>
            <person name="Hornischer K."/>
            <person name="Kauer G."/>
            <person name="Loehnert T.-H."/>
            <person name="Nordsiek G."/>
            <person name="Reichelt J."/>
            <person name="Scharfe M."/>
            <person name="Schoen O."/>
            <person name="Bargues M."/>
            <person name="Terol J."/>
            <person name="Climent J."/>
            <person name="Navarro P."/>
            <person name="Collado C."/>
            <person name="Perez-Perez A."/>
            <person name="Ottenwaelder B."/>
            <person name="Duchemin D."/>
            <person name="Cooke R."/>
            <person name="Laudie M."/>
            <person name="Berger-Llauro C."/>
            <person name="Purnelle B."/>
            <person name="Masuy D."/>
            <person name="de Haan M."/>
            <person name="Maarse A.C."/>
            <person name="Alcaraz J.-P."/>
            <person name="Cottet A."/>
            <person name="Casacuberta E."/>
            <person name="Monfort A."/>
            <person name="Argiriou A."/>
            <person name="Flores M."/>
            <person name="Liguori R."/>
            <person name="Vitale D."/>
            <person name="Mannhaupt G."/>
            <person name="Haase D."/>
            <person name="Schoof H."/>
            <person name="Rudd S."/>
            <person name="Zaccaria P."/>
            <person name="Mewes H.-W."/>
            <person name="Mayer K.F.X."/>
            <person name="Kaul S."/>
            <person name="Town C.D."/>
            <person name="Koo H.L."/>
            <person name="Tallon L.J."/>
            <person name="Jenkins J."/>
            <person name="Rooney T."/>
            <person name="Rizzo M."/>
            <person name="Walts A."/>
            <person name="Utterback T."/>
            <person name="Fujii C.Y."/>
            <person name="Shea T.P."/>
            <person name="Creasy T.H."/>
            <person name="Haas B."/>
            <person name="Maiti R."/>
            <person name="Wu D."/>
            <person name="Peterson J."/>
            <person name="Van Aken S."/>
            <person name="Pai G."/>
            <person name="Militscher J."/>
            <person name="Sellers P."/>
            <person name="Gill J.E."/>
            <person name="Feldblyum T.V."/>
            <person name="Preuss D."/>
            <person name="Lin X."/>
            <person name="Nierman W.C."/>
            <person name="Salzberg S.L."/>
            <person name="White O."/>
            <person name="Venter J.C."/>
            <person name="Fraser C.M."/>
            <person name="Kaneko T."/>
            <person name="Nakamura Y."/>
            <person name="Sato S."/>
            <person name="Kato T."/>
            <person name="Asamizu E."/>
            <person name="Sasamoto S."/>
            <person name="Kimura T."/>
            <person name="Idesawa K."/>
            <person name="Kawashima K."/>
            <person name="Kishida Y."/>
            <person name="Kiyokawa C."/>
            <person name="Kohara M."/>
            <person name="Matsumoto M."/>
            <person name="Matsuno A."/>
            <person name="Muraki A."/>
            <person name="Nakayama S."/>
            <person name="Nakazaki N."/>
            <person name="Shinpo S."/>
            <person name="Takeuchi C."/>
            <person name="Wada T."/>
            <person name="Watanabe A."/>
            <person name="Yamada M."/>
            <person name="Yasuda M."/>
            <person name="Tabata S."/>
        </authorList>
    </citation>
    <scope>NUCLEOTIDE SEQUENCE [LARGE SCALE GENOMIC DNA]</scope>
    <source>
        <strain>cv. Columbia</strain>
    </source>
</reference>
<reference key="2">
    <citation type="journal article" date="2017" name="Plant J.">
        <title>Araport11: a complete reannotation of the Arabidopsis thaliana reference genome.</title>
        <authorList>
            <person name="Cheng C.Y."/>
            <person name="Krishnakumar V."/>
            <person name="Chan A.P."/>
            <person name="Thibaud-Nissen F."/>
            <person name="Schobel S."/>
            <person name="Town C.D."/>
        </authorList>
    </citation>
    <scope>GENOME REANNOTATION</scope>
    <source>
        <strain>cv. Columbia</strain>
    </source>
</reference>
<reference key="3">
    <citation type="journal article" date="2003" name="Science">
        <title>Empirical analysis of transcriptional activity in the Arabidopsis genome.</title>
        <authorList>
            <person name="Yamada K."/>
            <person name="Lim J."/>
            <person name="Dale J.M."/>
            <person name="Chen H."/>
            <person name="Shinn P."/>
            <person name="Palm C.J."/>
            <person name="Southwick A.M."/>
            <person name="Wu H.C."/>
            <person name="Kim C.J."/>
            <person name="Nguyen M."/>
            <person name="Pham P.K."/>
            <person name="Cheuk R.F."/>
            <person name="Karlin-Newmann G."/>
            <person name="Liu S.X."/>
            <person name="Lam B."/>
            <person name="Sakano H."/>
            <person name="Wu T."/>
            <person name="Yu G."/>
            <person name="Miranda M."/>
            <person name="Quach H.L."/>
            <person name="Tripp M."/>
            <person name="Chang C.H."/>
            <person name="Lee J.M."/>
            <person name="Toriumi M.J."/>
            <person name="Chan M.M."/>
            <person name="Tang C.C."/>
            <person name="Onodera C.S."/>
            <person name="Deng J.M."/>
            <person name="Akiyama K."/>
            <person name="Ansari Y."/>
            <person name="Arakawa T."/>
            <person name="Banh J."/>
            <person name="Banno F."/>
            <person name="Bowser L."/>
            <person name="Brooks S.Y."/>
            <person name="Carninci P."/>
            <person name="Chao Q."/>
            <person name="Choy N."/>
            <person name="Enju A."/>
            <person name="Goldsmith A.D."/>
            <person name="Gurjal M."/>
            <person name="Hansen N.F."/>
            <person name="Hayashizaki Y."/>
            <person name="Johnson-Hopson C."/>
            <person name="Hsuan V.W."/>
            <person name="Iida K."/>
            <person name="Karnes M."/>
            <person name="Khan S."/>
            <person name="Koesema E."/>
            <person name="Ishida J."/>
            <person name="Jiang P.X."/>
            <person name="Jones T."/>
            <person name="Kawai J."/>
            <person name="Kamiya A."/>
            <person name="Meyers C."/>
            <person name="Nakajima M."/>
            <person name="Narusaka M."/>
            <person name="Seki M."/>
            <person name="Sakurai T."/>
            <person name="Satou M."/>
            <person name="Tamse R."/>
            <person name="Vaysberg M."/>
            <person name="Wallender E.K."/>
            <person name="Wong C."/>
            <person name="Yamamura Y."/>
            <person name="Yuan S."/>
            <person name="Shinozaki K."/>
            <person name="Davis R.W."/>
            <person name="Theologis A."/>
            <person name="Ecker J.R."/>
        </authorList>
    </citation>
    <scope>NUCLEOTIDE SEQUENCE [LARGE SCALE MRNA]</scope>
    <source>
        <strain>cv. Columbia</strain>
    </source>
</reference>
<reference key="4">
    <citation type="submission" date="2004-12" db="EMBL/GenBank/DDBJ databases">
        <title>Arabidopsis ORF clones.</title>
        <authorList>
            <person name="Kim C.J."/>
            <person name="Chen H."/>
            <person name="Cheuk R."/>
            <person name="Shinn P."/>
            <person name="Ecker J.R."/>
        </authorList>
    </citation>
    <scope>NUCLEOTIDE SEQUENCE [LARGE SCALE MRNA]</scope>
</reference>
<reference key="5">
    <citation type="submission" date="2002-03" db="EMBL/GenBank/DDBJ databases">
        <title>Full-length cDNA from Arabidopsis thaliana.</title>
        <authorList>
            <person name="Brover V.V."/>
            <person name="Troukhan M.E."/>
            <person name="Alexandrov N.A."/>
            <person name="Lu Y.-P."/>
            <person name="Flavell R.B."/>
            <person name="Feldmann K.A."/>
        </authorList>
    </citation>
    <scope>NUCLEOTIDE SEQUENCE [LARGE SCALE MRNA]</scope>
</reference>
<reference key="6">
    <citation type="journal article" date="2007" name="Mol. Cell">
        <title>Purification of a plant mediator from Arabidopsis thaliana identifies PFT1 as the Med25 subunit.</title>
        <authorList>
            <person name="Baeckstroem S."/>
            <person name="Elfving N."/>
            <person name="Nilsson R."/>
            <person name="Wingsle G."/>
            <person name="Bjoerklund S."/>
        </authorList>
    </citation>
    <scope>IDENTIFICATION BY MASS SPECTROMETRY</scope>
    <scope>IDENTIFICATION IN THE MEDIATOR COMPLEX</scope>
    <scope>NOMENCLATURE</scope>
</reference>
<reference key="7">
    <citation type="journal article" date="2011" name="Plant Physiol.">
        <title>The Mediator complex in plants: structure, phylogeny, and expression profiling of representative genes in a dicot (Arabidopsis) and a monocot (rice) during reproduction and abiotic stress.</title>
        <authorList>
            <person name="Mathur S."/>
            <person name="Vyas S."/>
            <person name="Kapoor S."/>
            <person name="Tyagi A.K."/>
        </authorList>
    </citation>
    <scope>IDENTIFICATION</scope>
    <scope>NOMENCLATURE</scope>
</reference>
<evidence type="ECO:0000250" key="1"/>
<evidence type="ECO:0000255" key="2"/>
<evidence type="ECO:0000256" key="3">
    <source>
        <dbReference type="SAM" id="MobiDB-lite"/>
    </source>
</evidence>
<evidence type="ECO:0000269" key="4">
    <source>
    </source>
</evidence>
<evidence type="ECO:0000305" key="5"/>
<gene>
    <name type="primary">MED27</name>
    <name type="synonym">MED3</name>
    <name type="synonym">MED3_1</name>
    <name type="ordered locus">At3g09180</name>
    <name type="ORF">F3L24.5</name>
    <name type="ORF">MZB10.22</name>
</gene>